<dbReference type="EC" id="2.1.3.-" evidence="1"/>
<dbReference type="EMBL" id="CP000857">
    <property type="protein sequence ID" value="ACN45947.1"/>
    <property type="molecule type" value="Genomic_DNA"/>
</dbReference>
<dbReference type="RefSeq" id="WP_000019615.1">
    <property type="nucleotide sequence ID" value="NC_012125.1"/>
</dbReference>
<dbReference type="SMR" id="C0Q2E4"/>
<dbReference type="KEGG" id="sei:SPC_1808"/>
<dbReference type="HOGENOM" id="CLU_078475_0_0_6"/>
<dbReference type="Proteomes" id="UP000001599">
    <property type="component" value="Chromosome"/>
</dbReference>
<dbReference type="GO" id="GO:0016743">
    <property type="term" value="F:carboxyl- or carbamoyltransferase activity"/>
    <property type="evidence" value="ECO:0007669"/>
    <property type="project" value="UniProtKB-UniRule"/>
</dbReference>
<dbReference type="GO" id="GO:1904047">
    <property type="term" value="F:S-adenosyl-L-methionine binding"/>
    <property type="evidence" value="ECO:0007669"/>
    <property type="project" value="UniProtKB-UniRule"/>
</dbReference>
<dbReference type="GO" id="GO:0002098">
    <property type="term" value="P:tRNA wobble uridine modification"/>
    <property type="evidence" value="ECO:0007669"/>
    <property type="project" value="InterPro"/>
</dbReference>
<dbReference type="CDD" id="cd02440">
    <property type="entry name" value="AdoMet_MTases"/>
    <property type="match status" value="1"/>
</dbReference>
<dbReference type="FunFam" id="3.40.50.150:FF:000030">
    <property type="entry name" value="Carboxy-S-adenosyl-L-methionine synthase"/>
    <property type="match status" value="1"/>
</dbReference>
<dbReference type="Gene3D" id="3.40.50.150">
    <property type="entry name" value="Vaccinia Virus protein VP39"/>
    <property type="match status" value="1"/>
</dbReference>
<dbReference type="HAMAP" id="MF_01589">
    <property type="entry name" value="Cx_SAM_synthase"/>
    <property type="match status" value="1"/>
</dbReference>
<dbReference type="InterPro" id="IPR005271">
    <property type="entry name" value="CmoA"/>
</dbReference>
<dbReference type="InterPro" id="IPR041698">
    <property type="entry name" value="Methyltransf_25"/>
</dbReference>
<dbReference type="InterPro" id="IPR029063">
    <property type="entry name" value="SAM-dependent_MTases_sf"/>
</dbReference>
<dbReference type="NCBIfam" id="TIGR00740">
    <property type="entry name" value="carboxy-S-adenosyl-L-methionine synthase CmoA"/>
    <property type="match status" value="1"/>
</dbReference>
<dbReference type="NCBIfam" id="NF011995">
    <property type="entry name" value="PRK15451.1"/>
    <property type="match status" value="1"/>
</dbReference>
<dbReference type="PANTHER" id="PTHR43861:SF2">
    <property type="entry name" value="CARBOXY-S-ADENOSYL-L-METHIONINE SYNTHASE"/>
    <property type="match status" value="1"/>
</dbReference>
<dbReference type="PANTHER" id="PTHR43861">
    <property type="entry name" value="TRANS-ACONITATE 2-METHYLTRANSFERASE-RELATED"/>
    <property type="match status" value="1"/>
</dbReference>
<dbReference type="Pfam" id="PF13649">
    <property type="entry name" value="Methyltransf_25"/>
    <property type="match status" value="1"/>
</dbReference>
<dbReference type="PIRSF" id="PIRSF006325">
    <property type="entry name" value="MeTrfase_bac"/>
    <property type="match status" value="1"/>
</dbReference>
<dbReference type="SUPFAM" id="SSF53335">
    <property type="entry name" value="S-adenosyl-L-methionine-dependent methyltransferases"/>
    <property type="match status" value="1"/>
</dbReference>
<comment type="function">
    <text evidence="1">Catalyzes the conversion of S-adenosyl-L-methionine (SAM) to carboxy-S-adenosyl-L-methionine (Cx-SAM).</text>
</comment>
<comment type="catalytic activity">
    <reaction evidence="1">
        <text>prephenate + S-adenosyl-L-methionine = carboxy-S-adenosyl-L-methionine + 3-phenylpyruvate + H2O</text>
        <dbReference type="Rhea" id="RHEA:51692"/>
        <dbReference type="ChEBI" id="CHEBI:15377"/>
        <dbReference type="ChEBI" id="CHEBI:18005"/>
        <dbReference type="ChEBI" id="CHEBI:29934"/>
        <dbReference type="ChEBI" id="CHEBI:59789"/>
        <dbReference type="ChEBI" id="CHEBI:134278"/>
    </reaction>
</comment>
<comment type="subunit">
    <text evidence="1">Homodimer.</text>
</comment>
<comment type="similarity">
    <text evidence="1">Belongs to the class I-like SAM-binding methyltransferase superfamily. Cx-SAM synthase family.</text>
</comment>
<accession>C0Q2E4</accession>
<organism>
    <name type="scientific">Salmonella paratyphi C (strain RKS4594)</name>
    <dbReference type="NCBI Taxonomy" id="476213"/>
    <lineage>
        <taxon>Bacteria</taxon>
        <taxon>Pseudomonadati</taxon>
        <taxon>Pseudomonadota</taxon>
        <taxon>Gammaproteobacteria</taxon>
        <taxon>Enterobacterales</taxon>
        <taxon>Enterobacteriaceae</taxon>
        <taxon>Salmonella</taxon>
    </lineage>
</organism>
<sequence>MSHRDTLFSAPIARLGDWTFDERVAEVFPDMIQRSVPGYSNIISMIGMLAERFVQPNTQVYDLGCSLGAATLSVRRNIRHEHCRIIAVDNSPAMIERCRRHIDAYKAPTPVEVVEGDIRDITIENASMVVLNFTLQFLEPAERQALLDKIYQGLNPGGALVLSEKFSFEDAKVGELLFNMHHDFKRANGYSELEISQKRSMLENVMLTDSVETHKSRLRKAGFEHSELWFQCFNFGSLVALKAGVAA</sequence>
<protein>
    <recommendedName>
        <fullName evidence="1">Carboxy-S-adenosyl-L-methionine synthase</fullName>
        <shortName evidence="1">Cx-SAM synthase</shortName>
        <ecNumber evidence="1">2.1.3.-</ecNumber>
    </recommendedName>
</protein>
<proteinExistence type="inferred from homology"/>
<keyword id="KW-0949">S-adenosyl-L-methionine</keyword>
<keyword id="KW-0808">Transferase</keyword>
<evidence type="ECO:0000255" key="1">
    <source>
        <dbReference type="HAMAP-Rule" id="MF_01589"/>
    </source>
</evidence>
<name>CMOA_SALPC</name>
<reference key="1">
    <citation type="journal article" date="2009" name="PLoS ONE">
        <title>Salmonella paratyphi C: genetic divergence from Salmonella choleraesuis and pathogenic convergence with Salmonella typhi.</title>
        <authorList>
            <person name="Liu W.-Q."/>
            <person name="Feng Y."/>
            <person name="Wang Y."/>
            <person name="Zou Q.-H."/>
            <person name="Chen F."/>
            <person name="Guo J.-T."/>
            <person name="Peng Y.-H."/>
            <person name="Jin Y."/>
            <person name="Li Y.-G."/>
            <person name="Hu S.-N."/>
            <person name="Johnston R.N."/>
            <person name="Liu G.-R."/>
            <person name="Liu S.-L."/>
        </authorList>
    </citation>
    <scope>NUCLEOTIDE SEQUENCE [LARGE SCALE GENOMIC DNA]</scope>
    <source>
        <strain>RKS4594</strain>
    </source>
</reference>
<gene>
    <name evidence="1" type="primary">cmoA</name>
    <name type="ordered locus">SPC_1808</name>
</gene>
<feature type="chain" id="PRO_1000185687" description="Carboxy-S-adenosyl-L-methionine synthase">
    <location>
        <begin position="1"/>
        <end position="247"/>
    </location>
</feature>
<feature type="binding site" evidence="1">
    <location>
        <position position="39"/>
    </location>
    <ligand>
        <name>S-adenosyl-L-methionine</name>
        <dbReference type="ChEBI" id="CHEBI:59789"/>
    </ligand>
</feature>
<feature type="binding site" evidence="1">
    <location>
        <begin position="64"/>
        <end position="66"/>
    </location>
    <ligand>
        <name>S-adenosyl-L-methionine</name>
        <dbReference type="ChEBI" id="CHEBI:59789"/>
    </ligand>
</feature>
<feature type="binding site" evidence="1">
    <location>
        <begin position="89"/>
        <end position="90"/>
    </location>
    <ligand>
        <name>S-adenosyl-L-methionine</name>
        <dbReference type="ChEBI" id="CHEBI:59789"/>
    </ligand>
</feature>
<feature type="binding site" evidence="1">
    <location>
        <begin position="117"/>
        <end position="118"/>
    </location>
    <ligand>
        <name>S-adenosyl-L-methionine</name>
        <dbReference type="ChEBI" id="CHEBI:59789"/>
    </ligand>
</feature>
<feature type="binding site" evidence="1">
    <location>
        <position position="132"/>
    </location>
    <ligand>
        <name>S-adenosyl-L-methionine</name>
        <dbReference type="ChEBI" id="CHEBI:59789"/>
    </ligand>
</feature>
<feature type="binding site" evidence="1">
    <location>
        <position position="199"/>
    </location>
    <ligand>
        <name>S-adenosyl-L-methionine</name>
        <dbReference type="ChEBI" id="CHEBI:59789"/>
    </ligand>
</feature>